<reference key="1">
    <citation type="journal article" date="2003" name="Nat. Genet.">
        <title>Comparative analysis of the genome sequences of Bordetella pertussis, Bordetella parapertussis and Bordetella bronchiseptica.</title>
        <authorList>
            <person name="Parkhill J."/>
            <person name="Sebaihia M."/>
            <person name="Preston A."/>
            <person name="Murphy L.D."/>
            <person name="Thomson N.R."/>
            <person name="Harris D.E."/>
            <person name="Holden M.T.G."/>
            <person name="Churcher C.M."/>
            <person name="Bentley S.D."/>
            <person name="Mungall K.L."/>
            <person name="Cerdeno-Tarraga A.-M."/>
            <person name="Temple L."/>
            <person name="James K.D."/>
            <person name="Harris B."/>
            <person name="Quail M.A."/>
            <person name="Achtman M."/>
            <person name="Atkin R."/>
            <person name="Baker S."/>
            <person name="Basham D."/>
            <person name="Bason N."/>
            <person name="Cherevach I."/>
            <person name="Chillingworth T."/>
            <person name="Collins M."/>
            <person name="Cronin A."/>
            <person name="Davis P."/>
            <person name="Doggett J."/>
            <person name="Feltwell T."/>
            <person name="Goble A."/>
            <person name="Hamlin N."/>
            <person name="Hauser H."/>
            <person name="Holroyd S."/>
            <person name="Jagels K."/>
            <person name="Leather S."/>
            <person name="Moule S."/>
            <person name="Norberczak H."/>
            <person name="O'Neil S."/>
            <person name="Ormond D."/>
            <person name="Price C."/>
            <person name="Rabbinowitsch E."/>
            <person name="Rutter S."/>
            <person name="Sanders M."/>
            <person name="Saunders D."/>
            <person name="Seeger K."/>
            <person name="Sharp S."/>
            <person name="Simmonds M."/>
            <person name="Skelton J."/>
            <person name="Squares R."/>
            <person name="Squares S."/>
            <person name="Stevens K."/>
            <person name="Unwin L."/>
            <person name="Whitehead S."/>
            <person name="Barrell B.G."/>
            <person name="Maskell D.J."/>
        </authorList>
    </citation>
    <scope>NUCLEOTIDE SEQUENCE [LARGE SCALE GENOMIC DNA]</scope>
    <source>
        <strain>12822 / ATCC BAA-587 / NCTC 13253</strain>
    </source>
</reference>
<comment type="function">
    <text evidence="1">NAD-binding protein involved in the addition of a carboxymethylaminomethyl (cmnm) group at the wobble position (U34) of certain tRNAs, forming tRNA-cmnm(5)s(2)U34.</text>
</comment>
<comment type="cofactor">
    <cofactor evidence="1">
        <name>FAD</name>
        <dbReference type="ChEBI" id="CHEBI:57692"/>
    </cofactor>
</comment>
<comment type="subunit">
    <text evidence="1">Homodimer. Heterotetramer of two MnmE and two MnmG subunits.</text>
</comment>
<comment type="subcellular location">
    <subcellularLocation>
        <location evidence="1">Cytoplasm</location>
    </subcellularLocation>
</comment>
<comment type="similarity">
    <text evidence="1">Belongs to the MnmG family.</text>
</comment>
<gene>
    <name evidence="1" type="primary">mnmG</name>
    <name evidence="1" type="synonym">gidA</name>
    <name type="ordered locus">BPP0001</name>
</gene>
<dbReference type="EMBL" id="BX640423">
    <property type="protein sequence ID" value="CAE39742.1"/>
    <property type="molecule type" value="Genomic_DNA"/>
</dbReference>
<dbReference type="RefSeq" id="WP_010927257.1">
    <property type="nucleotide sequence ID" value="NC_002928.3"/>
</dbReference>
<dbReference type="SMR" id="Q7W2I1"/>
<dbReference type="GeneID" id="93206226"/>
<dbReference type="KEGG" id="bpa:BPP0001"/>
<dbReference type="HOGENOM" id="CLU_007831_2_2_4"/>
<dbReference type="Proteomes" id="UP000001421">
    <property type="component" value="Chromosome"/>
</dbReference>
<dbReference type="GO" id="GO:0005829">
    <property type="term" value="C:cytosol"/>
    <property type="evidence" value="ECO:0007669"/>
    <property type="project" value="TreeGrafter"/>
</dbReference>
<dbReference type="GO" id="GO:0050660">
    <property type="term" value="F:flavin adenine dinucleotide binding"/>
    <property type="evidence" value="ECO:0007669"/>
    <property type="project" value="UniProtKB-UniRule"/>
</dbReference>
<dbReference type="GO" id="GO:0030488">
    <property type="term" value="P:tRNA methylation"/>
    <property type="evidence" value="ECO:0007669"/>
    <property type="project" value="TreeGrafter"/>
</dbReference>
<dbReference type="GO" id="GO:0002098">
    <property type="term" value="P:tRNA wobble uridine modification"/>
    <property type="evidence" value="ECO:0007669"/>
    <property type="project" value="InterPro"/>
</dbReference>
<dbReference type="FunFam" id="1.10.10.1800:FF:000001">
    <property type="entry name" value="tRNA uridine 5-carboxymethylaminomethyl modification enzyme MnmG"/>
    <property type="match status" value="1"/>
</dbReference>
<dbReference type="FunFam" id="1.10.150.570:FF:000001">
    <property type="entry name" value="tRNA uridine 5-carboxymethylaminomethyl modification enzyme MnmG"/>
    <property type="match status" value="1"/>
</dbReference>
<dbReference type="FunFam" id="3.50.50.60:FF:000002">
    <property type="entry name" value="tRNA uridine 5-carboxymethylaminomethyl modification enzyme MnmG"/>
    <property type="match status" value="1"/>
</dbReference>
<dbReference type="FunFam" id="3.50.50.60:FF:000010">
    <property type="entry name" value="tRNA uridine 5-carboxymethylaminomethyl modification enzyme MnmG"/>
    <property type="match status" value="1"/>
</dbReference>
<dbReference type="Gene3D" id="3.50.50.60">
    <property type="entry name" value="FAD/NAD(P)-binding domain"/>
    <property type="match status" value="2"/>
</dbReference>
<dbReference type="Gene3D" id="1.10.150.570">
    <property type="entry name" value="GidA associated domain, C-terminal subdomain"/>
    <property type="match status" value="1"/>
</dbReference>
<dbReference type="Gene3D" id="1.10.10.1800">
    <property type="entry name" value="tRNA uridine 5-carboxymethylaminomethyl modification enzyme MnmG/GidA"/>
    <property type="match status" value="1"/>
</dbReference>
<dbReference type="HAMAP" id="MF_00129">
    <property type="entry name" value="MnmG_GidA"/>
    <property type="match status" value="1"/>
</dbReference>
<dbReference type="InterPro" id="IPR036188">
    <property type="entry name" value="FAD/NAD-bd_sf"/>
</dbReference>
<dbReference type="InterPro" id="IPR049312">
    <property type="entry name" value="GIDA_C_N"/>
</dbReference>
<dbReference type="InterPro" id="IPR004416">
    <property type="entry name" value="MnmG"/>
</dbReference>
<dbReference type="InterPro" id="IPR002218">
    <property type="entry name" value="MnmG-rel"/>
</dbReference>
<dbReference type="InterPro" id="IPR020595">
    <property type="entry name" value="MnmG-rel_CS"/>
</dbReference>
<dbReference type="InterPro" id="IPR026904">
    <property type="entry name" value="MnmG_C"/>
</dbReference>
<dbReference type="InterPro" id="IPR047001">
    <property type="entry name" value="MnmG_C_subdom"/>
</dbReference>
<dbReference type="InterPro" id="IPR044920">
    <property type="entry name" value="MnmG_C_subdom_sf"/>
</dbReference>
<dbReference type="InterPro" id="IPR040131">
    <property type="entry name" value="MnmG_N"/>
</dbReference>
<dbReference type="NCBIfam" id="TIGR00136">
    <property type="entry name" value="mnmG_gidA"/>
    <property type="match status" value="1"/>
</dbReference>
<dbReference type="PANTHER" id="PTHR11806">
    <property type="entry name" value="GLUCOSE INHIBITED DIVISION PROTEIN A"/>
    <property type="match status" value="1"/>
</dbReference>
<dbReference type="PANTHER" id="PTHR11806:SF0">
    <property type="entry name" value="PROTEIN MTO1 HOMOLOG, MITOCHONDRIAL"/>
    <property type="match status" value="1"/>
</dbReference>
<dbReference type="Pfam" id="PF01134">
    <property type="entry name" value="GIDA"/>
    <property type="match status" value="1"/>
</dbReference>
<dbReference type="Pfam" id="PF21680">
    <property type="entry name" value="GIDA_C_1st"/>
    <property type="match status" value="1"/>
</dbReference>
<dbReference type="Pfam" id="PF13932">
    <property type="entry name" value="SAM_GIDA_C"/>
    <property type="match status" value="1"/>
</dbReference>
<dbReference type="SMART" id="SM01228">
    <property type="entry name" value="GIDA_assoc_3"/>
    <property type="match status" value="1"/>
</dbReference>
<dbReference type="SUPFAM" id="SSF51905">
    <property type="entry name" value="FAD/NAD(P)-binding domain"/>
    <property type="match status" value="1"/>
</dbReference>
<dbReference type="PROSITE" id="PS01280">
    <property type="entry name" value="GIDA_1"/>
    <property type="match status" value="1"/>
</dbReference>
<dbReference type="PROSITE" id="PS01281">
    <property type="entry name" value="GIDA_2"/>
    <property type="match status" value="1"/>
</dbReference>
<name>MNMG_BORPA</name>
<protein>
    <recommendedName>
        <fullName evidence="1">tRNA uridine 5-carboxymethylaminomethyl modification enzyme MnmG</fullName>
    </recommendedName>
    <alternativeName>
        <fullName evidence="1">Glucose-inhibited division protein A</fullName>
    </alternativeName>
</protein>
<proteinExistence type="inferred from homology"/>
<accession>Q7W2I1</accession>
<feature type="chain" id="PRO_0000117064" description="tRNA uridine 5-carboxymethylaminomethyl modification enzyme MnmG">
    <location>
        <begin position="1"/>
        <end position="639"/>
    </location>
</feature>
<feature type="binding site" evidence="1">
    <location>
        <begin position="13"/>
        <end position="18"/>
    </location>
    <ligand>
        <name>FAD</name>
        <dbReference type="ChEBI" id="CHEBI:57692"/>
    </ligand>
</feature>
<feature type="binding site" evidence="1">
    <location>
        <begin position="274"/>
        <end position="288"/>
    </location>
    <ligand>
        <name>NAD(+)</name>
        <dbReference type="ChEBI" id="CHEBI:57540"/>
    </ligand>
</feature>
<evidence type="ECO:0000255" key="1">
    <source>
        <dbReference type="HAMAP-Rule" id="MF_00129"/>
    </source>
</evidence>
<organism>
    <name type="scientific">Bordetella parapertussis (strain 12822 / ATCC BAA-587 / NCTC 13253)</name>
    <dbReference type="NCBI Taxonomy" id="257311"/>
    <lineage>
        <taxon>Bacteria</taxon>
        <taxon>Pseudomonadati</taxon>
        <taxon>Pseudomonadota</taxon>
        <taxon>Betaproteobacteria</taxon>
        <taxon>Burkholderiales</taxon>
        <taxon>Alcaligenaceae</taxon>
        <taxon>Bordetella</taxon>
    </lineage>
</organism>
<keyword id="KW-0963">Cytoplasm</keyword>
<keyword id="KW-0274">FAD</keyword>
<keyword id="KW-0285">Flavoprotein</keyword>
<keyword id="KW-0520">NAD</keyword>
<keyword id="KW-0819">tRNA processing</keyword>
<sequence length="639" mass="70151">MDFPREFDVIVVGGGHAGTEAALAAARAGAQTLLLTHNIETLGQMSCNPSIGGIGKGHLVKEVDALGGAMAIATDEAGIQFRILNSSKGPAVRATRVQADRVLYRNAMRARLENQPNLWLFQQAVDDLMVQGDQVVGAVTQIGLRFRARTVVLTAGTFLNGLIHVGLQNYSGGRAGDPPANSLGQRLKELQLPQGRLKTGTPPRIDGRSINYSVLEEQPGDLDPVPVFSFLGKASMHPRQLPCWITHTNARTHEIIRGGLDRSPMYSGVIEGVGPRYCPSIEDKIHRFADKASHQVFLEPEGLNTHEIYPNGVSTSLPFDVQYELIHSLPGLENAHILRPGYAIEYDYFDPRALKSTLETKAISGLFFAGQINGTTGYEEAAAQGLLAGANAALQAQGKEPWVPRRDEAYLGVLVDDLVTRGVTEPYRMFTSRAEYRLSLREDNADLRLTEIGRRLGLVDDVRWDAFSRKRDAVAQEVERLKSTWVNPRVLPAHAAEALLGKAIEREYSLSDLLKRPNVSYEALMQARTDEGELLAGPGVLEDDVLAEQVETQVKYAGYIARQQDEVQKHLSHEQQPIPADIDYDAVTSLSFEVRQKLKTHRPETIGQAARVSGVTPAAISLLLIHLKRLHYGSRKQAA</sequence>